<feature type="chain" id="PRO_0000260769" description="Cystic fibrosis transmembrane conductance regulator">
    <location>
        <begin position="1"/>
        <end position="1481"/>
    </location>
</feature>
<feature type="topological domain" description="Cytoplasmic" evidence="1">
    <location>
        <begin position="1"/>
        <end position="77"/>
    </location>
</feature>
<feature type="transmembrane region" description="Helical; Name=1" evidence="1">
    <location>
        <begin position="78"/>
        <end position="98"/>
    </location>
</feature>
<feature type="topological domain" description="Extracellular" evidence="1">
    <location>
        <begin position="99"/>
        <end position="122"/>
    </location>
</feature>
<feature type="transmembrane region" description="Helical; Name=2" evidence="1">
    <location>
        <begin position="123"/>
        <end position="146"/>
    </location>
</feature>
<feature type="topological domain" description="Cytoplasmic" evidence="1">
    <location>
        <begin position="147"/>
        <end position="195"/>
    </location>
</feature>
<feature type="transmembrane region" description="Helical; Name=3" evidence="1">
    <location>
        <begin position="196"/>
        <end position="216"/>
    </location>
</feature>
<feature type="topological domain" description="Extracellular" evidence="1">
    <location>
        <begin position="217"/>
        <end position="222"/>
    </location>
</feature>
<feature type="transmembrane region" description="Helical; Name=4" evidence="1">
    <location>
        <begin position="223"/>
        <end position="243"/>
    </location>
</feature>
<feature type="topological domain" description="Cytoplasmic" evidence="1">
    <location>
        <begin position="244"/>
        <end position="298"/>
    </location>
</feature>
<feature type="transmembrane region" description="Helical; Name=5" evidence="1">
    <location>
        <begin position="299"/>
        <end position="319"/>
    </location>
</feature>
<feature type="topological domain" description="Extracellular" evidence="1">
    <location>
        <begin position="320"/>
        <end position="339"/>
    </location>
</feature>
<feature type="transmembrane region" description="Helical; Name=6" evidence="1">
    <location>
        <begin position="340"/>
        <end position="358"/>
    </location>
</feature>
<feature type="topological domain" description="Cytoplasmic" evidence="1">
    <location>
        <begin position="359"/>
        <end position="858"/>
    </location>
</feature>
<feature type="transmembrane region" description="Helical; Name=7" evidence="1">
    <location>
        <begin position="859"/>
        <end position="879"/>
    </location>
</feature>
<feature type="topological domain" description="Extracellular" evidence="1">
    <location>
        <begin position="880"/>
        <end position="918"/>
    </location>
</feature>
<feature type="transmembrane region" description="Discontinuously helical; Name=8" evidence="1">
    <location>
        <begin position="919"/>
        <end position="939"/>
    </location>
</feature>
<feature type="topological domain" description="Cytoplasmic" evidence="1">
    <location>
        <begin position="940"/>
        <end position="990"/>
    </location>
</feature>
<feature type="transmembrane region" description="Helical; Name=9" evidence="1">
    <location>
        <begin position="991"/>
        <end position="1011"/>
    </location>
</feature>
<feature type="topological domain" description="Extracellular" evidence="1">
    <location>
        <begin position="1012"/>
        <end position="1013"/>
    </location>
</feature>
<feature type="transmembrane region" description="Helical; Name=10" evidence="1">
    <location>
        <begin position="1014"/>
        <end position="1034"/>
    </location>
</feature>
<feature type="topological domain" description="Cytoplasmic" evidence="1">
    <location>
        <begin position="1035"/>
        <end position="1095"/>
    </location>
</feature>
<feature type="transmembrane region" description="Helical; Name=11" evidence="1">
    <location>
        <begin position="1096"/>
        <end position="1116"/>
    </location>
</feature>
<feature type="topological domain" description="Extracellular" evidence="1">
    <location>
        <begin position="1117"/>
        <end position="1130"/>
    </location>
</feature>
<feature type="transmembrane region" description="Helical; Name=12" evidence="1">
    <location>
        <begin position="1131"/>
        <end position="1151"/>
    </location>
</feature>
<feature type="topological domain" description="Cytoplasmic" evidence="1">
    <location>
        <begin position="1152"/>
        <end position="1481"/>
    </location>
</feature>
<feature type="domain" description="ABC transmembrane type-1 1" evidence="6">
    <location>
        <begin position="81"/>
        <end position="365"/>
    </location>
</feature>
<feature type="domain" description="ABC transporter 1" evidence="5">
    <location>
        <begin position="423"/>
        <end position="646"/>
    </location>
</feature>
<feature type="domain" description="ABC transmembrane type-1 2" evidence="6">
    <location>
        <begin position="859"/>
        <end position="1155"/>
    </location>
</feature>
<feature type="domain" description="ABC transporter 2" evidence="5">
    <location>
        <begin position="1211"/>
        <end position="1444"/>
    </location>
</feature>
<feature type="region of interest" description="Disordered R region" evidence="1">
    <location>
        <begin position="654"/>
        <end position="831"/>
    </location>
</feature>
<feature type="region of interest" description="Interaction with GORASP2" evidence="1">
    <location>
        <begin position="1387"/>
        <end position="1481"/>
    </location>
</feature>
<feature type="region of interest" description="Disordered" evidence="7">
    <location>
        <begin position="1453"/>
        <end position="1481"/>
    </location>
</feature>
<feature type="short sequence motif" description="PDZ-binding" evidence="1">
    <location>
        <begin position="1479"/>
        <end position="1481"/>
    </location>
</feature>
<feature type="compositionally biased region" description="Acidic residues" evidence="7">
    <location>
        <begin position="1471"/>
        <end position="1481"/>
    </location>
</feature>
<feature type="binding site" evidence="1">
    <location>
        <position position="401"/>
    </location>
    <ligand>
        <name>ATP</name>
        <dbReference type="ChEBI" id="CHEBI:30616"/>
        <label>1</label>
    </ligand>
</feature>
<feature type="binding site" evidence="1">
    <location>
        <position position="434"/>
    </location>
    <ligand>
        <name>ATP</name>
        <dbReference type="ChEBI" id="CHEBI:30616"/>
        <label>1</label>
    </ligand>
</feature>
<feature type="binding site" evidence="5">
    <location>
        <begin position="458"/>
        <end position="465"/>
    </location>
    <ligand>
        <name>ATP</name>
        <dbReference type="ChEBI" id="CHEBI:30616"/>
        <label>1</label>
    </ligand>
</feature>
<feature type="binding site" evidence="2">
    <location>
        <position position="493"/>
    </location>
    <ligand>
        <name>ATP</name>
        <dbReference type="ChEBI" id="CHEBI:30616"/>
        <label>1</label>
    </ligand>
</feature>
<feature type="binding site" evidence="1">
    <location>
        <position position="1220"/>
    </location>
    <ligand>
        <name>ATP</name>
        <dbReference type="ChEBI" id="CHEBI:30616"/>
        <label>2</label>
    </ligand>
</feature>
<feature type="binding site" evidence="5">
    <location>
        <begin position="1245"/>
        <end position="1252"/>
    </location>
    <ligand>
        <name>ATP</name>
        <dbReference type="ChEBI" id="CHEBI:30616"/>
        <label>2</label>
    </ligand>
</feature>
<feature type="modified residue" description="Phosphoserine" evidence="1">
    <location>
        <position position="549"/>
    </location>
</feature>
<feature type="modified residue" description="Phosphoserine" evidence="1">
    <location>
        <position position="660"/>
    </location>
</feature>
<feature type="modified residue" description="Phosphoserine; by PKA" evidence="1">
    <location>
        <position position="670"/>
    </location>
</feature>
<feature type="modified residue" description="Phosphoserine" evidence="1">
    <location>
        <position position="686"/>
    </location>
</feature>
<feature type="modified residue" description="Phosphoserine" evidence="1">
    <location>
        <position position="700"/>
    </location>
</feature>
<feature type="modified residue" description="Phosphoserine" evidence="1">
    <location>
        <position position="712"/>
    </location>
</feature>
<feature type="modified residue" description="Phosphothreonine" evidence="1">
    <location>
        <position position="717"/>
    </location>
</feature>
<feature type="modified residue" description="Phosphoserine" evidence="1">
    <location>
        <position position="737"/>
    </location>
</feature>
<feature type="modified residue" description="Phosphoserine" evidence="1">
    <location>
        <position position="753"/>
    </location>
</feature>
<feature type="modified residue" description="Phosphoserine" evidence="1">
    <location>
        <position position="768"/>
    </location>
</feature>
<feature type="modified residue" description="Phosphoserine" evidence="1">
    <location>
        <position position="790"/>
    </location>
</feature>
<feature type="modified residue" description="Phosphoserine" evidence="1">
    <location>
        <position position="795"/>
    </location>
</feature>
<feature type="modified residue" description="Phosphoserine" evidence="1">
    <location>
        <position position="813"/>
    </location>
</feature>
<feature type="modified residue" description="Phosphoserine" evidence="1">
    <location>
        <position position="1445"/>
    </location>
</feature>
<feature type="modified residue" description="Phosphoserine" evidence="1">
    <location>
        <position position="1457"/>
    </location>
</feature>
<feature type="lipid moiety-binding region" description="S-palmitoyl cysteine" evidence="1">
    <location>
        <position position="524"/>
    </location>
</feature>
<feature type="lipid moiety-binding region" description="S-palmitoyl cysteine" evidence="1">
    <location>
        <position position="1396"/>
    </location>
</feature>
<feature type="glycosylation site" description="N-linked (GlcNAc...) asparagine" evidence="4">
    <location>
        <position position="894"/>
    </location>
</feature>
<feature type="glycosylation site" description="N-linked (GlcNAc...) asparagine" evidence="4">
    <location>
        <position position="900"/>
    </location>
</feature>
<feature type="glycosylation site" description="N-linked (GlcNAc...) asparagine" evidence="4">
    <location>
        <position position="909"/>
    </location>
</feature>
<feature type="cross-link" description="Glycyl lysine isopeptide (Lys-Gly) (interchain with G-Cter in ubiquitin)" evidence="1">
    <location>
        <position position="688"/>
    </location>
</feature>
<evidence type="ECO:0000250" key="1">
    <source>
        <dbReference type="UniProtKB" id="P13569"/>
    </source>
</evidence>
<evidence type="ECO:0000250" key="2">
    <source>
        <dbReference type="UniProtKB" id="P26361"/>
    </source>
</evidence>
<evidence type="ECO:0000250" key="3">
    <source>
        <dbReference type="UniProtKB" id="P34158"/>
    </source>
</evidence>
<evidence type="ECO:0000255" key="4"/>
<evidence type="ECO:0000255" key="5">
    <source>
        <dbReference type="PROSITE-ProRule" id="PRU00434"/>
    </source>
</evidence>
<evidence type="ECO:0000255" key="6">
    <source>
        <dbReference type="PROSITE-ProRule" id="PRU00441"/>
    </source>
</evidence>
<evidence type="ECO:0000256" key="7">
    <source>
        <dbReference type="SAM" id="MobiDB-lite"/>
    </source>
</evidence>
<evidence type="ECO:0000305" key="8"/>
<keyword id="KW-0067">ATP-binding</keyword>
<keyword id="KW-1003">Cell membrane</keyword>
<keyword id="KW-0868">Chloride</keyword>
<keyword id="KW-0869">Chloride channel</keyword>
<keyword id="KW-0256">Endoplasmic reticulum</keyword>
<keyword id="KW-0967">Endosome</keyword>
<keyword id="KW-0325">Glycoprotein</keyword>
<keyword id="KW-0407">Ion channel</keyword>
<keyword id="KW-0406">Ion transport</keyword>
<keyword id="KW-0413">Isomerase</keyword>
<keyword id="KW-1017">Isopeptide bond</keyword>
<keyword id="KW-0449">Lipoprotein</keyword>
<keyword id="KW-0472">Membrane</keyword>
<keyword id="KW-0547">Nucleotide-binding</keyword>
<keyword id="KW-0539">Nucleus</keyword>
<keyword id="KW-0564">Palmitate</keyword>
<keyword id="KW-0597">Phosphoprotein</keyword>
<keyword id="KW-1185">Reference proteome</keyword>
<keyword id="KW-0677">Repeat</keyword>
<keyword id="KW-0812">Transmembrane</keyword>
<keyword id="KW-1133">Transmembrane helix</keyword>
<keyword id="KW-0813">Transport</keyword>
<keyword id="KW-0832">Ubl conjugation</keyword>
<name>CFTR_AOTNA</name>
<dbReference type="EC" id="5.6.1.6" evidence="1"/>
<dbReference type="EMBL" id="DP000197">
    <property type="protein sequence ID" value="ABJ08890.1"/>
    <property type="molecule type" value="Genomic_DNA"/>
</dbReference>
<dbReference type="RefSeq" id="XP_064230188.1">
    <property type="nucleotide sequence ID" value="XM_064374118.1"/>
</dbReference>
<dbReference type="BMRB" id="Q07DV2"/>
<dbReference type="SMR" id="Q07DV2"/>
<dbReference type="STRING" id="37293.ENSANAP00000002691"/>
<dbReference type="GlyCosmos" id="Q07DV2">
    <property type="glycosylation" value="3 sites, No reported glycans"/>
</dbReference>
<dbReference type="GeneID" id="105733776"/>
<dbReference type="Proteomes" id="UP000233020">
    <property type="component" value="Whole Genome Shotgun Assembly"/>
</dbReference>
<dbReference type="GO" id="GO:0016324">
    <property type="term" value="C:apical plasma membrane"/>
    <property type="evidence" value="ECO:0000250"/>
    <property type="project" value="UniProtKB"/>
</dbReference>
<dbReference type="GO" id="GO:0034707">
    <property type="term" value="C:chloride channel complex"/>
    <property type="evidence" value="ECO:0007669"/>
    <property type="project" value="UniProtKB-KW"/>
</dbReference>
<dbReference type="GO" id="GO:0005829">
    <property type="term" value="C:cytosol"/>
    <property type="evidence" value="ECO:0007669"/>
    <property type="project" value="TreeGrafter"/>
</dbReference>
<dbReference type="GO" id="GO:0005769">
    <property type="term" value="C:early endosome"/>
    <property type="evidence" value="ECO:0000250"/>
    <property type="project" value="UniProtKB"/>
</dbReference>
<dbReference type="GO" id="GO:0031901">
    <property type="term" value="C:early endosome membrane"/>
    <property type="evidence" value="ECO:0007669"/>
    <property type="project" value="UniProtKB-SubCell"/>
</dbReference>
<dbReference type="GO" id="GO:0005789">
    <property type="term" value="C:endoplasmic reticulum membrane"/>
    <property type="evidence" value="ECO:0000250"/>
    <property type="project" value="UniProtKB"/>
</dbReference>
<dbReference type="GO" id="GO:0016020">
    <property type="term" value="C:membrane"/>
    <property type="evidence" value="ECO:0000250"/>
    <property type="project" value="UniProtKB"/>
</dbReference>
<dbReference type="GO" id="GO:0005634">
    <property type="term" value="C:nucleus"/>
    <property type="evidence" value="ECO:0000250"/>
    <property type="project" value="UniProtKB"/>
</dbReference>
<dbReference type="GO" id="GO:0005886">
    <property type="term" value="C:plasma membrane"/>
    <property type="evidence" value="ECO:0000250"/>
    <property type="project" value="UniProtKB"/>
</dbReference>
<dbReference type="GO" id="GO:0055038">
    <property type="term" value="C:recycling endosome membrane"/>
    <property type="evidence" value="ECO:0007669"/>
    <property type="project" value="UniProtKB-SubCell"/>
</dbReference>
<dbReference type="GO" id="GO:0140359">
    <property type="term" value="F:ABC-type transporter activity"/>
    <property type="evidence" value="ECO:0007669"/>
    <property type="project" value="InterPro"/>
</dbReference>
<dbReference type="GO" id="GO:0005524">
    <property type="term" value="F:ATP binding"/>
    <property type="evidence" value="ECO:0007669"/>
    <property type="project" value="UniProtKB-KW"/>
</dbReference>
<dbReference type="GO" id="GO:0016887">
    <property type="term" value="F:ATP hydrolysis activity"/>
    <property type="evidence" value="ECO:0000250"/>
    <property type="project" value="UniProtKB"/>
</dbReference>
<dbReference type="GO" id="GO:0015106">
    <property type="term" value="F:bicarbonate transmembrane transporter activity"/>
    <property type="evidence" value="ECO:0000250"/>
    <property type="project" value="UniProtKB"/>
</dbReference>
<dbReference type="GO" id="GO:0005254">
    <property type="term" value="F:chloride channel activity"/>
    <property type="evidence" value="ECO:0000250"/>
    <property type="project" value="UniProtKB"/>
</dbReference>
<dbReference type="GO" id="GO:0019869">
    <property type="term" value="F:chloride channel inhibitor activity"/>
    <property type="evidence" value="ECO:0000250"/>
    <property type="project" value="UniProtKB"/>
</dbReference>
<dbReference type="GO" id="GO:0015108">
    <property type="term" value="F:chloride transmembrane transporter activity"/>
    <property type="evidence" value="ECO:0000250"/>
    <property type="project" value="UniProtKB"/>
</dbReference>
<dbReference type="GO" id="GO:0005260">
    <property type="term" value="F:intracellularly ATP-gated chloride channel activity"/>
    <property type="evidence" value="ECO:0000250"/>
    <property type="project" value="UniProtKB"/>
</dbReference>
<dbReference type="GO" id="GO:0015701">
    <property type="term" value="P:bicarbonate transport"/>
    <property type="evidence" value="ECO:0000250"/>
    <property type="project" value="UniProtKB"/>
</dbReference>
<dbReference type="GO" id="GO:0071320">
    <property type="term" value="P:cellular response to cAMP"/>
    <property type="evidence" value="ECO:0000250"/>
    <property type="project" value="UniProtKB"/>
</dbReference>
<dbReference type="GO" id="GO:1904322">
    <property type="term" value="P:cellular response to forskolin"/>
    <property type="evidence" value="ECO:0000250"/>
    <property type="project" value="UniProtKB"/>
</dbReference>
<dbReference type="GO" id="GO:1902476">
    <property type="term" value="P:chloride transmembrane transport"/>
    <property type="evidence" value="ECO:0000250"/>
    <property type="project" value="UniProtKB"/>
</dbReference>
<dbReference type="GO" id="GO:0051454">
    <property type="term" value="P:intracellular pH elevation"/>
    <property type="evidence" value="ECO:0000250"/>
    <property type="project" value="UniProtKB"/>
</dbReference>
<dbReference type="GO" id="GO:0060081">
    <property type="term" value="P:membrane hyperpolarization"/>
    <property type="evidence" value="ECO:0000250"/>
    <property type="project" value="UniProtKB"/>
</dbReference>
<dbReference type="GO" id="GO:0050891">
    <property type="term" value="P:multicellular organismal-level water homeostasis"/>
    <property type="evidence" value="ECO:0000250"/>
    <property type="project" value="UniProtKB"/>
</dbReference>
<dbReference type="GO" id="GO:0034976">
    <property type="term" value="P:response to endoplasmic reticulum stress"/>
    <property type="evidence" value="ECO:0000250"/>
    <property type="project" value="UniProtKB"/>
</dbReference>
<dbReference type="GO" id="GO:0048240">
    <property type="term" value="P:sperm capacitation"/>
    <property type="evidence" value="ECO:0000250"/>
    <property type="project" value="UniProtKB"/>
</dbReference>
<dbReference type="GO" id="GO:0035377">
    <property type="term" value="P:transepithelial water transport"/>
    <property type="evidence" value="ECO:0000250"/>
    <property type="project" value="UniProtKB"/>
</dbReference>
<dbReference type="CDD" id="cd18594">
    <property type="entry name" value="ABC_6TM_CFTR_D1"/>
    <property type="match status" value="1"/>
</dbReference>
<dbReference type="CDD" id="cd18600">
    <property type="entry name" value="ABC_6TM_CFTR_D2"/>
    <property type="match status" value="1"/>
</dbReference>
<dbReference type="CDD" id="cd03291">
    <property type="entry name" value="ABCC_CFTR1"/>
    <property type="match status" value="1"/>
</dbReference>
<dbReference type="CDD" id="cd03289">
    <property type="entry name" value="ABCC_CFTR2"/>
    <property type="match status" value="1"/>
</dbReference>
<dbReference type="FunFam" id="1.20.1560.10:FF:000017">
    <property type="entry name" value="Cystic fibrosis transmembrane conductance regulator"/>
    <property type="match status" value="1"/>
</dbReference>
<dbReference type="FunFam" id="1.20.1560.10:FF:000019">
    <property type="entry name" value="Cystic fibrosis transmembrane conductance regulator"/>
    <property type="match status" value="1"/>
</dbReference>
<dbReference type="FunFam" id="3.40.50.300:FF:000581">
    <property type="entry name" value="Cystic fibrosis transmembrane conductance regulator"/>
    <property type="match status" value="1"/>
</dbReference>
<dbReference type="FunFam" id="3.40.50.300:FF:000591">
    <property type="entry name" value="Cystic fibrosis transmembrane conductance regulator"/>
    <property type="match status" value="1"/>
</dbReference>
<dbReference type="Gene3D" id="1.20.1560.10">
    <property type="entry name" value="ABC transporter type 1, transmembrane domain"/>
    <property type="match status" value="2"/>
</dbReference>
<dbReference type="Gene3D" id="3.40.50.300">
    <property type="entry name" value="P-loop containing nucleotide triphosphate hydrolases"/>
    <property type="match status" value="2"/>
</dbReference>
<dbReference type="InterPro" id="IPR003593">
    <property type="entry name" value="AAA+_ATPase"/>
</dbReference>
<dbReference type="InterPro" id="IPR011527">
    <property type="entry name" value="ABC1_TM_dom"/>
</dbReference>
<dbReference type="InterPro" id="IPR036640">
    <property type="entry name" value="ABC1_TM_sf"/>
</dbReference>
<dbReference type="InterPro" id="IPR003439">
    <property type="entry name" value="ABC_transporter-like_ATP-bd"/>
</dbReference>
<dbReference type="InterPro" id="IPR017871">
    <property type="entry name" value="ABC_transporter-like_CS"/>
</dbReference>
<dbReference type="InterPro" id="IPR050173">
    <property type="entry name" value="ABC_transporter_C-like"/>
</dbReference>
<dbReference type="InterPro" id="IPR009147">
    <property type="entry name" value="CFTR/ABCC7"/>
</dbReference>
<dbReference type="InterPro" id="IPR047082">
    <property type="entry name" value="CFTR1_ATP-bd_dom1"/>
</dbReference>
<dbReference type="InterPro" id="IPR025837">
    <property type="entry name" value="CFTR_reg_dom"/>
</dbReference>
<dbReference type="InterPro" id="IPR027417">
    <property type="entry name" value="P-loop_NTPase"/>
</dbReference>
<dbReference type="NCBIfam" id="TIGR01271">
    <property type="entry name" value="CFTR_protein"/>
    <property type="match status" value="1"/>
</dbReference>
<dbReference type="PANTHER" id="PTHR24223">
    <property type="entry name" value="ATP-BINDING CASSETTE SUB-FAMILY C"/>
    <property type="match status" value="1"/>
</dbReference>
<dbReference type="PANTHER" id="PTHR24223:SF19">
    <property type="entry name" value="CYSTIC FIBROSIS TRANSMEMBRANE CONDUCTANCE REGULATOR"/>
    <property type="match status" value="1"/>
</dbReference>
<dbReference type="Pfam" id="PF00664">
    <property type="entry name" value="ABC_membrane"/>
    <property type="match status" value="2"/>
</dbReference>
<dbReference type="Pfam" id="PF00005">
    <property type="entry name" value="ABC_tran"/>
    <property type="match status" value="2"/>
</dbReference>
<dbReference type="Pfam" id="PF14396">
    <property type="entry name" value="CFTR_R"/>
    <property type="match status" value="1"/>
</dbReference>
<dbReference type="PRINTS" id="PR01851">
    <property type="entry name" value="CYSFIBREGLTR"/>
</dbReference>
<dbReference type="SMART" id="SM00382">
    <property type="entry name" value="AAA"/>
    <property type="match status" value="2"/>
</dbReference>
<dbReference type="SUPFAM" id="SSF90123">
    <property type="entry name" value="ABC transporter transmembrane region"/>
    <property type="match status" value="2"/>
</dbReference>
<dbReference type="SUPFAM" id="SSF52540">
    <property type="entry name" value="P-loop containing nucleoside triphosphate hydrolases"/>
    <property type="match status" value="2"/>
</dbReference>
<dbReference type="PROSITE" id="PS50929">
    <property type="entry name" value="ABC_TM1F"/>
    <property type="match status" value="2"/>
</dbReference>
<dbReference type="PROSITE" id="PS00211">
    <property type="entry name" value="ABC_TRANSPORTER_1"/>
    <property type="match status" value="1"/>
</dbReference>
<dbReference type="PROSITE" id="PS50893">
    <property type="entry name" value="ABC_TRANSPORTER_2"/>
    <property type="match status" value="2"/>
</dbReference>
<organism>
    <name type="scientific">Aotus nancymaae</name>
    <name type="common">Ma's night monkey</name>
    <dbReference type="NCBI Taxonomy" id="37293"/>
    <lineage>
        <taxon>Eukaryota</taxon>
        <taxon>Metazoa</taxon>
        <taxon>Chordata</taxon>
        <taxon>Craniata</taxon>
        <taxon>Vertebrata</taxon>
        <taxon>Euteleostomi</taxon>
        <taxon>Mammalia</taxon>
        <taxon>Eutheria</taxon>
        <taxon>Euarchontoglires</taxon>
        <taxon>Primates</taxon>
        <taxon>Haplorrhini</taxon>
        <taxon>Platyrrhini</taxon>
        <taxon>Aotidae</taxon>
        <taxon>Aotus</taxon>
    </lineage>
</organism>
<gene>
    <name evidence="1" type="primary">CFTR</name>
    <name type="synonym">ABCC7</name>
</gene>
<comment type="function">
    <text evidence="1 2">Epithelial ion channel that plays an important role in the regulation of epithelial ion and water transport and fluid homeostasis. Mediates the transport of chloride ions across the cell membrane (By similarity). Possesses an intrinsic ATPase activity and utilizes ATP to gate its channel; the passive flow of anions through the channel is gated by cycles of ATP binding and hydrolysis by the ATP-binding domains (By similarity). The ion channel is also permeable to HCO(3)(-); selectivity depends on the extracellular chloride concentration. Exerts its function also by modulating the activity of other ion channels and transporters. Contributes to the regulation of the pH and the ion content of the epithelial fluid layer. Modulates the activity of the epithelial sodium channel (ENaC) complex, in part by regulating the cell surface expression of the ENaC complex. May regulate bicarbonate secretion and salvage in epithelial cells by regulating the transporter SLC4A7. Can inhibit the chloride channel activity of ANO1 (By similarity). Plays a role in the chloride and bicarbonate homeostasis during sperm epididymal maturation and capacitation (By similarity).</text>
</comment>
<comment type="catalytic activity">
    <reaction evidence="1">
        <text>ATP + H2O + closed Cl(-) channel = ADP + phosphate + open Cl(-) channel.</text>
        <dbReference type="EC" id="5.6.1.6"/>
    </reaction>
</comment>
<comment type="catalytic activity">
    <reaction evidence="1">
        <text>chloride(in) = chloride(out)</text>
        <dbReference type="Rhea" id="RHEA:29823"/>
        <dbReference type="ChEBI" id="CHEBI:17996"/>
    </reaction>
</comment>
<comment type="catalytic activity">
    <reaction evidence="1">
        <text>hydrogencarbonate(in) = hydrogencarbonate(out)</text>
        <dbReference type="Rhea" id="RHEA:28695"/>
        <dbReference type="ChEBI" id="CHEBI:17544"/>
    </reaction>
</comment>
<comment type="catalytic activity">
    <reaction evidence="1">
        <text>ATP + H2O = ADP + phosphate + H(+)</text>
        <dbReference type="Rhea" id="RHEA:13065"/>
        <dbReference type="ChEBI" id="CHEBI:15377"/>
        <dbReference type="ChEBI" id="CHEBI:15378"/>
        <dbReference type="ChEBI" id="CHEBI:30616"/>
        <dbReference type="ChEBI" id="CHEBI:43474"/>
        <dbReference type="ChEBI" id="CHEBI:456216"/>
    </reaction>
    <physiologicalReaction direction="left-to-right" evidence="1">
        <dbReference type="Rhea" id="RHEA:13066"/>
    </physiologicalReaction>
</comment>
<comment type="subunit">
    <text evidence="1 2 3">Monomer; does not require oligomerization for channel activity. May form oligomers in the membrane (By similarity). Interacts with SLC26A3, SLC26A6 and NHERF1 (By similarity). Interacts with SHANK2 (By similarity). Interacts with MYO6 (By similarity). Interacts (via C-terminus) with GOPC (via PDZ domain); this promotes CFTR internalization and thereby decreases channel activity. Interacts with SLC4A7 through NHERF1. Found in a complex with MYO5B and RAB11A. Interacts with ANO1. Interacts with SLC26A8 (By similarity). Interacts with AHCYL1; the interaction increases CFTR activity (By similarity). Interacts with CSE1L (By similarity). The core-glycosylated form interacts with GORASP2 (via PDZ GRASP-type 1 domain) in respone to ER stress (By similarity). Interacts with MARCHF2; the interaction leads to CFTR ubiqtuitination and degradation (By similarity). Interacts with ADGRG2 (By similarity).</text>
</comment>
<comment type="subcellular location">
    <subcellularLocation>
        <location evidence="2">Apical cell membrane</location>
        <topology evidence="1">Multi-pass membrane protein</topology>
    </subcellularLocation>
    <subcellularLocation>
        <location evidence="1">Early endosome membrane</location>
        <topology evidence="1">Multi-pass membrane protein</topology>
    </subcellularLocation>
    <subcellularLocation>
        <location evidence="2">Cell membrane</location>
        <topology evidence="1">Multi-pass membrane protein</topology>
    </subcellularLocation>
    <subcellularLocation>
        <location evidence="1">Recycling endosome membrane</location>
        <topology evidence="1">Multi-pass membrane protein</topology>
    </subcellularLocation>
    <subcellularLocation>
        <location evidence="1">Endoplasmic reticulum membrane</location>
        <topology evidence="1">Multi-pass membrane protein</topology>
    </subcellularLocation>
    <subcellularLocation>
        <location evidence="3">Nucleus</location>
    </subcellularLocation>
    <text evidence="1 3">The channel is internalized from the cell surface into an endosomal recycling compartment, from where it is recycled to the cell membrane. In the oviduct and bronchus, detected on the apical side of epithelial cells, but not associated with cilia. In Sertoli cells, a processed products is detected in the nucleus. ER stress induces GORASP2-mediated unconventional (ER/Golgi-independent) trafficking of core-glycosylated CFTR to cell membrane.</text>
</comment>
<comment type="domain">
    <text evidence="1 2">Binds and hydrolyzes ATP via the two cytoplasmic ABC transporter nucleotide-binding domains. The two ATP-binding domains interact with each other, forming a head-to-tail dimer. Normal ATPase activity requires interaction between the two domains. The first ABC transporter nucleotide-binding domain has no ATPase activity by itself.</text>
</comment>
<comment type="domain">
    <text evidence="1">The PDZ-binding motif mediates interactions with GOPC and with the SLC4A7, NHERF1/EBP50 complex.</text>
</comment>
<comment type="domain">
    <text evidence="1">The disordered R region mediates channel activation when it is phosphorylated, but not in the absence of phosphorylation.</text>
</comment>
<comment type="PTM">
    <text evidence="1">N-glycosylated.</text>
</comment>
<comment type="PTM">
    <text evidence="1">Phosphorylated; cAMP treatment promotes phosphorylation and activates the channel. Dephosphorylation decreases the ATPase activity (in vitro). Phosphorylation at PKA sites activates the channel. Phosphorylation at PKC sites enhances the response to phosphorylation by PKA. Phosphorylated by AMPK; this inhibits channel activity.</text>
</comment>
<comment type="PTM">
    <text evidence="1">Ubiquitinated, leading to its degradation in the lysosome. Deubiquitination by USP10 in early endosomes enhances its endocytic recycling to the cell membrane. Ubiquitinated by RNF185 during ER stress. Ubiquitinated by MARCHF2 (By similarity).</text>
</comment>
<comment type="similarity">
    <text evidence="8">Belongs to the ABC transporter superfamily. ABCC family. CFTR transporter (TC 3.A.1.202) subfamily.</text>
</comment>
<reference key="1">
    <citation type="submission" date="2006-09" db="EMBL/GenBank/DDBJ databases">
        <title>NISC comparative sequencing initiative.</title>
        <authorList>
            <person name="Antonellis A."/>
            <person name="Ayele K."/>
            <person name="Benjamin B."/>
            <person name="Blakesley R.W."/>
            <person name="Boakye A."/>
            <person name="Bouffard G.G."/>
            <person name="Brinkley C."/>
            <person name="Brooks S."/>
            <person name="Chu G."/>
            <person name="Coleman H."/>
            <person name="Engle J."/>
            <person name="Gestole M."/>
            <person name="Greene A."/>
            <person name="Guan X."/>
            <person name="Gupta J."/>
            <person name="Haghighi P."/>
            <person name="Han J."/>
            <person name="Hansen N."/>
            <person name="Ho S.-L."/>
            <person name="Hu P."/>
            <person name="Hunter G."/>
            <person name="Hurle B."/>
            <person name="Idol J.R."/>
            <person name="Kwong P."/>
            <person name="Laric P."/>
            <person name="Larson S."/>
            <person name="Lee-Lin S.-Q."/>
            <person name="Legaspi R."/>
            <person name="Madden M."/>
            <person name="Maduro Q.L."/>
            <person name="Maduro V.B."/>
            <person name="Margulies E.H."/>
            <person name="Masiello C."/>
            <person name="Maskeri B."/>
            <person name="McDowell J."/>
            <person name="Mojidi H.A."/>
            <person name="Mullikin J.C."/>
            <person name="Oestreicher J.S."/>
            <person name="Park M."/>
            <person name="Portnoy M.E."/>
            <person name="Prasad A."/>
            <person name="Puri O."/>
            <person name="Reddix-Dugue N."/>
            <person name="Schandler K."/>
            <person name="Schueler M.G."/>
            <person name="Sison C."/>
            <person name="Stantripop S."/>
            <person name="Stephen E."/>
            <person name="Taye A."/>
            <person name="Thomas J.W."/>
            <person name="Thomas P.J."/>
            <person name="Tsipouri V."/>
            <person name="Ung L."/>
            <person name="Vogt J.L."/>
            <person name="Wetherby K.D."/>
            <person name="Young A."/>
            <person name="Green E.D."/>
        </authorList>
    </citation>
    <scope>NUCLEOTIDE SEQUENCE [LARGE SCALE GENOMIC DNA]</scope>
</reference>
<proteinExistence type="inferred from homology"/>
<sequence>MQRSPLEKASVVSKLFFSWTRPILKKGYRQRLELSDIYQIPSADSADNLSEKLEREWDRELASKKNPKLINALRRCFFWRFTFYGILLYLGEVTKAVQPLLLGRIIASYDPDNKTERSIAIYLGIGLCLLFIVRTLLLHPAIFGLHHIGMQMRIAMFSLIYKKTLKLSSRVLDKISIGQLVSLLSNNLNKFDEGLALAHFVWIAPLQVALLMGLIWELLQASAFCGLGFLIVLALFQAGLGRMMMKYRDQRAGKINERLVITSEMIENIQSVKAYCWEEAMEKIIENLRQTELKLTRKAAYVRYFNSSAFFFSGFFVVFLSVLPYALIKGIVLRKIFTTISFCIVLRMAVTRQFPWAVQTWYDSLGAINKIQDFLQKQEYKTLEYNLTTTEVVMENVTAFWEEGFGELFEKAKQNNNNRKASNGDDNLFFSNFSLLGTPVLKDINFKIERGQLLAVAGSTGAGKTSLLMMIMGELEPSEGKIKHSGRISFCSQFSWIMPGTIKENIIFGVSYDEYRYRSVIKACQLEEDISKFAEKDNIVLGEGGITLSGGQRARISLARAVYKDADLYLLDSPFGYLDVLTEKEIFESCVCKLMANKTRILVTSKMEHLKKADKILILHEGSSYFYGTFSELQNLRPDFSSKLMGYDSFDQFSSERRNSILTETLRRFSLEGDAPVSWTETKKQSFKQTGEFGEKRKNSILNSINSIRKFSIVQKTPLQMNGIEEDSDEPLERRLSLVPDSEQGEAILPRISMINTGPALQVRRRQSVLNMMTHSVNQGQSVHRKTTASTRKVSLAPQANLTELDIYSRRLSQETGLEISEEINEEDLKECFFDDMESIPAVTTWNTYLRYITLHKSLIFVLIWCLVIFLAEVAASLVVLWLLGNTPFQDKGNSTYSRNNSYAVIITNTSSYYVFYIYVGVADTLLALGFFRGLPLVHTLITVSKMLHHKMLHSVLQAPMSTLNTLKAGGILNRFSKDIAILDDLLPLTIFDFIQLLLIVIGAIAVVSVLQPYIFLATVPVIAAFILLRAYFLQTSQQLKQLESAGRSPIFTHLVTSLKGLWTLRAFGRQPYFETLFHKALNLHTANWFLYLSTLRWFQMRIEMIFVIFFIAVTFISILTTGEGEGTVGIILTLAMNIMSTLQWAVNSSIDVDSLMRSVSRVFKFIDMPTEEGKPTKSTKAYRNGQLSKVMIIENSHVKKDDIWPSGGQMTIKDLTAKYIEGGNAILENISFSISPGQRVGLLGRTGSGKSTLLSAFLRLLNTEGEIQIDGVSWDSITLQQWRKAFGVIPQKVFIFTGTFRKNLDPYEQWSDQEIWKVADEVGLRSVIEQFPGKLDFVLVDGGCVLSHGHKQLMCLARSVLSKAKILLLDEPSAHLDPVTYQIIRRALKQAFADCTVILCEHRIEAMLECQQFLVIEENKVRQYDSIQKLLNEKSLFRQAISHSDRVKLFPHRNSSKYKSQPQIASLKEETEEEVQETRL</sequence>
<protein>
    <recommendedName>
        <fullName evidence="1">Cystic fibrosis transmembrane conductance regulator</fullName>
        <shortName>CFTR</shortName>
    </recommendedName>
    <alternativeName>
        <fullName>ATP-binding cassette sub-family C member 7</fullName>
    </alternativeName>
    <alternativeName>
        <fullName>Channel conductance-controlling ATPase</fullName>
        <ecNumber evidence="1">5.6.1.6</ecNumber>
    </alternativeName>
    <alternativeName>
        <fullName>cAMP-dependent chloride channel</fullName>
    </alternativeName>
</protein>
<accession>Q07DV2</accession>